<organism>
    <name type="scientific">Listeria monocytogenes serotype 4b (strain F2365)</name>
    <dbReference type="NCBI Taxonomy" id="265669"/>
    <lineage>
        <taxon>Bacteria</taxon>
        <taxon>Bacillati</taxon>
        <taxon>Bacillota</taxon>
        <taxon>Bacilli</taxon>
        <taxon>Bacillales</taxon>
        <taxon>Listeriaceae</taxon>
        <taxon>Listeria</taxon>
    </lineage>
</organism>
<evidence type="ECO:0000255" key="1">
    <source>
        <dbReference type="HAMAP-Rule" id="MF_01684"/>
    </source>
</evidence>
<comment type="function">
    <text evidence="1">Catalyzes the irreversible cleavage of the glycosidic bond in both 5'-methylthioadenosine (MTA) and S-adenosylhomocysteine (SAH/AdoHcy) to adenine and the corresponding thioribose, 5'-methylthioribose and S-ribosylhomocysteine, respectively. Also cleaves 5'-deoxyadenosine, a toxic by-product of radical S-adenosylmethionine (SAM) enzymes, into 5-deoxyribose and adenine.</text>
</comment>
<comment type="catalytic activity">
    <reaction evidence="1">
        <text>S-adenosyl-L-homocysteine + H2O = S-(5-deoxy-D-ribos-5-yl)-L-homocysteine + adenine</text>
        <dbReference type="Rhea" id="RHEA:17805"/>
        <dbReference type="ChEBI" id="CHEBI:15377"/>
        <dbReference type="ChEBI" id="CHEBI:16708"/>
        <dbReference type="ChEBI" id="CHEBI:57856"/>
        <dbReference type="ChEBI" id="CHEBI:58195"/>
        <dbReference type="EC" id="3.2.2.9"/>
    </reaction>
</comment>
<comment type="catalytic activity">
    <reaction evidence="1">
        <text>S-methyl-5'-thioadenosine + H2O = 5-(methylsulfanyl)-D-ribose + adenine</text>
        <dbReference type="Rhea" id="RHEA:13617"/>
        <dbReference type="ChEBI" id="CHEBI:15377"/>
        <dbReference type="ChEBI" id="CHEBI:16708"/>
        <dbReference type="ChEBI" id="CHEBI:17509"/>
        <dbReference type="ChEBI" id="CHEBI:78440"/>
        <dbReference type="EC" id="3.2.2.9"/>
    </reaction>
</comment>
<comment type="catalytic activity">
    <reaction evidence="1">
        <text>5'-deoxyadenosine + H2O = 5-deoxy-D-ribose + adenine</text>
        <dbReference type="Rhea" id="RHEA:29859"/>
        <dbReference type="ChEBI" id="CHEBI:15377"/>
        <dbReference type="ChEBI" id="CHEBI:16708"/>
        <dbReference type="ChEBI" id="CHEBI:17319"/>
        <dbReference type="ChEBI" id="CHEBI:149540"/>
        <dbReference type="EC" id="3.2.2.9"/>
    </reaction>
    <physiologicalReaction direction="left-to-right" evidence="1">
        <dbReference type="Rhea" id="RHEA:29860"/>
    </physiologicalReaction>
</comment>
<comment type="pathway">
    <text evidence="1">Amino-acid biosynthesis; L-methionine biosynthesis via salvage pathway; S-methyl-5-thio-alpha-D-ribose 1-phosphate from S-methyl-5'-thioadenosine (hydrolase route): step 1/2.</text>
</comment>
<comment type="similarity">
    <text evidence="1">Belongs to the PNP/UDP phosphorylase family. MtnN subfamily.</text>
</comment>
<sequence length="233" mass="25333">MTIGIIGAMEEEVELLKNSMPSVEEIVIGGAKFYVGEIAGKEVVLLESGIGKVNAALGTTLMADRFKPEVIINTGSAGGMAEGLAVGDVIISDRLAYGDVDVTEFGYTYGQVPRMPAFYQGDAVLLKKAETIYREYFAASENKAVYGLVVTNDSFIMRPDQHETIRTFFPDVKAVEMEAAAIAQVAYQFDIPFLIIRAISDLANQEATISFDEFIHLAARQSATCIIELLKTI</sequence>
<protein>
    <recommendedName>
        <fullName evidence="1">5'-methylthioadenosine/S-adenosylhomocysteine nucleosidase</fullName>
        <shortName evidence="1">MTA/SAH nucleosidase</shortName>
        <shortName evidence="1">MTAN</shortName>
        <ecNumber evidence="1">3.2.2.9</ecNumber>
    </recommendedName>
    <alternativeName>
        <fullName evidence="1">5'-deoxyadenosine nucleosidase</fullName>
        <shortName evidence="1">DOA nucleosidase</shortName>
        <shortName evidence="1">dAdo nucleosidase</shortName>
    </alternativeName>
    <alternativeName>
        <fullName evidence="1">5'-methylthioadenosine nucleosidase</fullName>
        <shortName evidence="1">MTA nucleosidase</shortName>
    </alternativeName>
    <alternativeName>
        <fullName evidence="1">S-adenosylhomocysteine nucleosidase</fullName>
        <shortName evidence="1">AdoHcy nucleosidase</shortName>
        <shortName evidence="1">SAH nucleosidase</shortName>
        <shortName evidence="1">SRH nucleosidase</shortName>
    </alternativeName>
</protein>
<keyword id="KW-0028">Amino-acid biosynthesis</keyword>
<keyword id="KW-0378">Hydrolase</keyword>
<keyword id="KW-0486">Methionine biosynthesis</keyword>
<name>MTNN_LISMF</name>
<reference key="1">
    <citation type="journal article" date="2004" name="Nucleic Acids Res.">
        <title>Whole genome comparisons of serotype 4b and 1/2a strains of the food-borne pathogen Listeria monocytogenes reveal new insights into the core genome components of this species.</title>
        <authorList>
            <person name="Nelson K.E."/>
            <person name="Fouts D.E."/>
            <person name="Mongodin E.F."/>
            <person name="Ravel J."/>
            <person name="DeBoy R.T."/>
            <person name="Kolonay J.F."/>
            <person name="Rasko D.A."/>
            <person name="Angiuoli S.V."/>
            <person name="Gill S.R."/>
            <person name="Paulsen I.T."/>
            <person name="Peterson J.D."/>
            <person name="White O."/>
            <person name="Nelson W.C."/>
            <person name="Nierman W.C."/>
            <person name="Beanan M.J."/>
            <person name="Brinkac L.M."/>
            <person name="Daugherty S.C."/>
            <person name="Dodson R.J."/>
            <person name="Durkin A.S."/>
            <person name="Madupu R."/>
            <person name="Haft D.H."/>
            <person name="Selengut J."/>
            <person name="Van Aken S.E."/>
            <person name="Khouri H.M."/>
            <person name="Fedorova N."/>
            <person name="Forberger H.A."/>
            <person name="Tran B."/>
            <person name="Kathariou S."/>
            <person name="Wonderling L.D."/>
            <person name="Uhlich G.A."/>
            <person name="Bayles D.O."/>
            <person name="Luchansky J.B."/>
            <person name="Fraser C.M."/>
        </authorList>
    </citation>
    <scope>NUCLEOTIDE SEQUENCE [LARGE SCALE GENOMIC DNA]</scope>
    <source>
        <strain>F2365</strain>
    </source>
</reference>
<proteinExistence type="inferred from homology"/>
<gene>
    <name evidence="1" type="primary">mtnN</name>
    <name type="ordered locus">LMOf2365_1513</name>
</gene>
<accession>Q71ZH6</accession>
<dbReference type="EC" id="3.2.2.9" evidence="1"/>
<dbReference type="EMBL" id="AE017262">
    <property type="protein sequence ID" value="AAT04288.1"/>
    <property type="molecule type" value="Genomic_DNA"/>
</dbReference>
<dbReference type="RefSeq" id="WP_010958905.1">
    <property type="nucleotide sequence ID" value="NC_002973.6"/>
</dbReference>
<dbReference type="SMR" id="Q71ZH6"/>
<dbReference type="KEGG" id="lmf:LMOf2365_1513"/>
<dbReference type="HOGENOM" id="CLU_031248_2_2_9"/>
<dbReference type="UniPathway" id="UPA00904">
    <property type="reaction ID" value="UER00871"/>
</dbReference>
<dbReference type="GO" id="GO:0005829">
    <property type="term" value="C:cytosol"/>
    <property type="evidence" value="ECO:0007669"/>
    <property type="project" value="TreeGrafter"/>
</dbReference>
<dbReference type="GO" id="GO:0008782">
    <property type="term" value="F:adenosylhomocysteine nucleosidase activity"/>
    <property type="evidence" value="ECO:0007669"/>
    <property type="project" value="UniProtKB-UniRule"/>
</dbReference>
<dbReference type="GO" id="GO:0008930">
    <property type="term" value="F:methylthioadenosine nucleosidase activity"/>
    <property type="evidence" value="ECO:0007669"/>
    <property type="project" value="UniProtKB-UniRule"/>
</dbReference>
<dbReference type="GO" id="GO:0019509">
    <property type="term" value="P:L-methionine salvage from methylthioadenosine"/>
    <property type="evidence" value="ECO:0007669"/>
    <property type="project" value="UniProtKB-UniRule"/>
</dbReference>
<dbReference type="GO" id="GO:0019284">
    <property type="term" value="P:L-methionine salvage from S-adenosylmethionine"/>
    <property type="evidence" value="ECO:0007669"/>
    <property type="project" value="TreeGrafter"/>
</dbReference>
<dbReference type="GO" id="GO:0009164">
    <property type="term" value="P:nucleoside catabolic process"/>
    <property type="evidence" value="ECO:0007669"/>
    <property type="project" value="InterPro"/>
</dbReference>
<dbReference type="CDD" id="cd09008">
    <property type="entry name" value="MTAN"/>
    <property type="match status" value="1"/>
</dbReference>
<dbReference type="FunFam" id="3.40.50.1580:FF:000001">
    <property type="entry name" value="MTA/SAH nucleosidase family protein"/>
    <property type="match status" value="1"/>
</dbReference>
<dbReference type="Gene3D" id="3.40.50.1580">
    <property type="entry name" value="Nucleoside phosphorylase domain"/>
    <property type="match status" value="1"/>
</dbReference>
<dbReference type="HAMAP" id="MF_01684">
    <property type="entry name" value="Salvage_MtnN"/>
    <property type="match status" value="1"/>
</dbReference>
<dbReference type="InterPro" id="IPR010049">
    <property type="entry name" value="MTA_SAH_Nsdase"/>
</dbReference>
<dbReference type="InterPro" id="IPR000845">
    <property type="entry name" value="Nucleoside_phosphorylase_d"/>
</dbReference>
<dbReference type="InterPro" id="IPR035994">
    <property type="entry name" value="Nucleoside_phosphorylase_sf"/>
</dbReference>
<dbReference type="NCBIfam" id="TIGR01704">
    <property type="entry name" value="MTA_SAH-Nsdase"/>
    <property type="match status" value="1"/>
</dbReference>
<dbReference type="NCBIfam" id="NF004079">
    <property type="entry name" value="PRK05584.1"/>
    <property type="match status" value="1"/>
</dbReference>
<dbReference type="PANTHER" id="PTHR46832">
    <property type="entry name" value="5'-METHYLTHIOADENOSINE/S-ADENOSYLHOMOCYSTEINE NUCLEOSIDASE"/>
    <property type="match status" value="1"/>
</dbReference>
<dbReference type="PANTHER" id="PTHR46832:SF1">
    <property type="entry name" value="5'-METHYLTHIOADENOSINE_S-ADENOSYLHOMOCYSTEINE NUCLEOSIDASE"/>
    <property type="match status" value="1"/>
</dbReference>
<dbReference type="Pfam" id="PF01048">
    <property type="entry name" value="PNP_UDP_1"/>
    <property type="match status" value="1"/>
</dbReference>
<dbReference type="SUPFAM" id="SSF53167">
    <property type="entry name" value="Purine and uridine phosphorylases"/>
    <property type="match status" value="1"/>
</dbReference>
<feature type="chain" id="PRO_0000359314" description="5'-methylthioadenosine/S-adenosylhomocysteine nucleosidase">
    <location>
        <begin position="1"/>
        <end position="233"/>
    </location>
</feature>
<feature type="active site" description="Proton acceptor" evidence="1">
    <location>
        <position position="12"/>
    </location>
</feature>
<feature type="active site" description="Proton donor" evidence="1">
    <location>
        <position position="201"/>
    </location>
</feature>
<feature type="binding site" evidence="1">
    <location>
        <position position="78"/>
    </location>
    <ligand>
        <name>substrate</name>
    </ligand>
</feature>
<feature type="binding site" evidence="1">
    <location>
        <position position="156"/>
    </location>
    <ligand>
        <name>substrate</name>
    </ligand>
</feature>
<feature type="binding site" evidence="1">
    <location>
        <begin position="177"/>
        <end position="178"/>
    </location>
    <ligand>
        <name>substrate</name>
    </ligand>
</feature>